<evidence type="ECO:0000255" key="1">
    <source>
        <dbReference type="HAMAP-Rule" id="MF_01396"/>
    </source>
</evidence>
<feature type="chain" id="PRO_0000362973" description="ATP synthase subunit c, chloroplastic">
    <location>
        <begin position="1"/>
        <end position="81"/>
    </location>
</feature>
<feature type="transmembrane region" description="Helical" evidence="1">
    <location>
        <begin position="3"/>
        <end position="23"/>
    </location>
</feature>
<feature type="transmembrane region" description="Helical" evidence="1">
    <location>
        <begin position="57"/>
        <end position="77"/>
    </location>
</feature>
<feature type="site" description="Reversibly protonated during proton transport" evidence="1">
    <location>
        <position position="61"/>
    </location>
</feature>
<name>ATPH_CYAM1</name>
<keyword id="KW-0066">ATP synthesis</keyword>
<keyword id="KW-0138">CF(0)</keyword>
<keyword id="KW-0150">Chloroplast</keyword>
<keyword id="KW-0375">Hydrogen ion transport</keyword>
<keyword id="KW-0406">Ion transport</keyword>
<keyword id="KW-0446">Lipid-binding</keyword>
<keyword id="KW-0472">Membrane</keyword>
<keyword id="KW-0934">Plastid</keyword>
<keyword id="KW-1185">Reference proteome</keyword>
<keyword id="KW-0793">Thylakoid</keyword>
<keyword id="KW-0812">Transmembrane</keyword>
<keyword id="KW-1133">Transmembrane helix</keyword>
<keyword id="KW-0813">Transport</keyword>
<gene>
    <name evidence="1" type="primary">atpH</name>
</gene>
<dbReference type="EMBL" id="AB002583">
    <property type="protein sequence ID" value="BAC76283.1"/>
    <property type="molecule type" value="Genomic_DNA"/>
</dbReference>
<dbReference type="RefSeq" id="NP_849121.1">
    <property type="nucleotide sequence ID" value="NC_004799.1"/>
</dbReference>
<dbReference type="SMR" id="Q85FR2"/>
<dbReference type="STRING" id="280699.Q85FR2"/>
<dbReference type="EnsemblPlants" id="CMV221CT">
    <property type="protein sequence ID" value="CMV221CT"/>
    <property type="gene ID" value="CMV221C"/>
</dbReference>
<dbReference type="GeneID" id="844871"/>
<dbReference type="Gramene" id="CMV221CT">
    <property type="protein sequence ID" value="CMV221CT"/>
    <property type="gene ID" value="CMV221C"/>
</dbReference>
<dbReference type="KEGG" id="cme:CymeCp189"/>
<dbReference type="eggNOG" id="KOG0232">
    <property type="taxonomic scope" value="Eukaryota"/>
</dbReference>
<dbReference type="HOGENOM" id="CLU_148047_2_0_1"/>
<dbReference type="Proteomes" id="UP000007014">
    <property type="component" value="Chloroplast"/>
</dbReference>
<dbReference type="GO" id="GO:0009535">
    <property type="term" value="C:chloroplast thylakoid membrane"/>
    <property type="evidence" value="ECO:0007669"/>
    <property type="project" value="UniProtKB-SubCell"/>
</dbReference>
<dbReference type="GO" id="GO:0045259">
    <property type="term" value="C:proton-transporting ATP synthase complex"/>
    <property type="evidence" value="ECO:0007669"/>
    <property type="project" value="UniProtKB-KW"/>
</dbReference>
<dbReference type="GO" id="GO:0033177">
    <property type="term" value="C:proton-transporting two-sector ATPase complex, proton-transporting domain"/>
    <property type="evidence" value="ECO:0007669"/>
    <property type="project" value="InterPro"/>
</dbReference>
<dbReference type="GO" id="GO:0008289">
    <property type="term" value="F:lipid binding"/>
    <property type="evidence" value="ECO:0007669"/>
    <property type="project" value="UniProtKB-KW"/>
</dbReference>
<dbReference type="GO" id="GO:0046933">
    <property type="term" value="F:proton-transporting ATP synthase activity, rotational mechanism"/>
    <property type="evidence" value="ECO:0007669"/>
    <property type="project" value="UniProtKB-UniRule"/>
</dbReference>
<dbReference type="CDD" id="cd18183">
    <property type="entry name" value="ATP-synt_Fo_c_ATPH"/>
    <property type="match status" value="1"/>
</dbReference>
<dbReference type="FunFam" id="1.20.20.10:FF:000001">
    <property type="entry name" value="ATP synthase subunit c, chloroplastic"/>
    <property type="match status" value="1"/>
</dbReference>
<dbReference type="Gene3D" id="1.20.20.10">
    <property type="entry name" value="F1F0 ATP synthase subunit C"/>
    <property type="match status" value="1"/>
</dbReference>
<dbReference type="HAMAP" id="MF_01396">
    <property type="entry name" value="ATP_synth_c_bact"/>
    <property type="match status" value="1"/>
</dbReference>
<dbReference type="InterPro" id="IPR005953">
    <property type="entry name" value="ATP_synth_csu_bac/chlpt"/>
</dbReference>
<dbReference type="InterPro" id="IPR000454">
    <property type="entry name" value="ATP_synth_F0_csu"/>
</dbReference>
<dbReference type="InterPro" id="IPR020537">
    <property type="entry name" value="ATP_synth_F0_csu_DDCD_BS"/>
</dbReference>
<dbReference type="InterPro" id="IPR038662">
    <property type="entry name" value="ATP_synth_F0_csu_sf"/>
</dbReference>
<dbReference type="InterPro" id="IPR002379">
    <property type="entry name" value="ATPase_proteolipid_c-like_dom"/>
</dbReference>
<dbReference type="InterPro" id="IPR035921">
    <property type="entry name" value="F/V-ATP_Csub_sf"/>
</dbReference>
<dbReference type="NCBIfam" id="TIGR01260">
    <property type="entry name" value="ATP_synt_c"/>
    <property type="match status" value="1"/>
</dbReference>
<dbReference type="NCBIfam" id="NF005608">
    <property type="entry name" value="PRK07354.1"/>
    <property type="match status" value="1"/>
</dbReference>
<dbReference type="PANTHER" id="PTHR10031">
    <property type="entry name" value="ATP SYNTHASE LIPID-BINDING PROTEIN, MITOCHONDRIAL"/>
    <property type="match status" value="1"/>
</dbReference>
<dbReference type="PANTHER" id="PTHR10031:SF0">
    <property type="entry name" value="ATPASE PROTEIN 9"/>
    <property type="match status" value="1"/>
</dbReference>
<dbReference type="Pfam" id="PF00137">
    <property type="entry name" value="ATP-synt_C"/>
    <property type="match status" value="1"/>
</dbReference>
<dbReference type="PRINTS" id="PR00124">
    <property type="entry name" value="ATPASEC"/>
</dbReference>
<dbReference type="SUPFAM" id="SSF81333">
    <property type="entry name" value="F1F0 ATP synthase subunit C"/>
    <property type="match status" value="1"/>
</dbReference>
<dbReference type="PROSITE" id="PS00605">
    <property type="entry name" value="ATPASE_C"/>
    <property type="match status" value="1"/>
</dbReference>
<geneLocation type="chloroplast"/>
<protein>
    <recommendedName>
        <fullName evidence="1">ATP synthase subunit c, chloroplastic</fullName>
    </recommendedName>
    <alternativeName>
        <fullName evidence="1">ATP synthase F(0) sector subunit c</fullName>
    </alternativeName>
    <alternativeName>
        <fullName evidence="1">ATPase subunit III</fullName>
    </alternativeName>
    <alternativeName>
        <fullName evidence="1">F-type ATPase subunit c</fullName>
        <shortName evidence="1">F-ATPase subunit c</shortName>
    </alternativeName>
    <alternativeName>
        <fullName evidence="1">Lipid-binding protein</fullName>
    </alternativeName>
</protein>
<comment type="function">
    <text evidence="1">F(1)F(0) ATP synthase produces ATP from ADP in the presence of a proton or sodium gradient. F-type ATPases consist of two structural domains, F(1) containing the extramembraneous catalytic core and F(0) containing the membrane proton channel, linked together by a central stalk and a peripheral stalk. During catalysis, ATP synthesis in the catalytic domain of F(1) is coupled via a rotary mechanism of the central stalk subunits to proton translocation.</text>
</comment>
<comment type="function">
    <text evidence="1">Key component of the F(0) channel; it plays a direct role in translocation across the membrane. A homomeric c-ring of between 10-14 subunits forms the central stalk rotor element with the F(1) delta and epsilon subunits.</text>
</comment>
<comment type="subunit">
    <text evidence="1">F-type ATPases have 2 components, F(1) - the catalytic core - and F(0) - the membrane proton channel. F(1) has five subunits: alpha(3), beta(3), gamma(1), delta(1), epsilon(1). F(0) has four main subunits: a(1), b(1), b'(1) and c(10-14). The alpha and beta chains form an alternating ring which encloses part of the gamma chain. F(1) is attached to F(0) by a central stalk formed by the gamma and epsilon chains, while a peripheral stalk is formed by the delta, b and b' chains.</text>
</comment>
<comment type="subcellular location">
    <subcellularLocation>
        <location evidence="1">Plastid</location>
        <location evidence="1">Chloroplast thylakoid membrane</location>
        <topology evidence="1">Multi-pass membrane protein</topology>
    </subcellularLocation>
</comment>
<comment type="miscellaneous">
    <text>In plastids the F-type ATPase is also known as CF(1)CF(0).</text>
</comment>
<comment type="similarity">
    <text evidence="1">Belongs to the ATPase C chain family.</text>
</comment>
<reference key="1">
    <citation type="journal article" date="2003" name="DNA Res.">
        <title>Complete sequence and analysis of the plastid genome of the unicellular red alga Cyanidioschyzon merolae.</title>
        <authorList>
            <person name="Ohta N."/>
            <person name="Matsuzaki M."/>
            <person name="Misumi O."/>
            <person name="Miyagishima S.-Y."/>
            <person name="Nozaki H."/>
            <person name="Tanaka K."/>
            <person name="Shin-i T."/>
            <person name="Kohara Y."/>
            <person name="Kuroiwa T."/>
        </authorList>
    </citation>
    <scope>NUCLEOTIDE SEQUENCE [LARGE SCALE GENOMIC DNA]</scope>
    <source>
        <strain>NIES-3377 / 10D</strain>
    </source>
</reference>
<proteinExistence type="inferred from homology"/>
<sequence>MEAIVSAASVIAAGLAVGLAAIGPGIGQGSAAANAVEGLARQPEAEGKIRGTLLLSLAFMESLTIYGLVVALSLLFANPFS</sequence>
<accession>Q85FR2</accession>
<organism>
    <name type="scientific">Cyanidioschyzon merolae (strain NIES-3377 / 10D)</name>
    <name type="common">Unicellular red alga</name>
    <dbReference type="NCBI Taxonomy" id="280699"/>
    <lineage>
        <taxon>Eukaryota</taxon>
        <taxon>Rhodophyta</taxon>
        <taxon>Bangiophyceae</taxon>
        <taxon>Cyanidiales</taxon>
        <taxon>Cyanidiaceae</taxon>
        <taxon>Cyanidioschyzon</taxon>
    </lineage>
</organism>